<sequence length="156" mass="16734">MNIVEGKLSLNGDEKVAIINARFNHIITDRLVEGARDAYLRHGGKDENLDLVLVPGAFEIPMALNRLLACSKYDAVCCLGAVIRGSTPHFDYVSAEVTKGVANVALQFAKPVAFGVLTVDSIEQAIERAGSKAGNKGFEAMVTVIELLSLYSALKN</sequence>
<proteinExistence type="inferred from homology"/>
<organism>
    <name type="scientific">Sulfurospirillum multivorans</name>
    <name type="common">Dehalospirillum multivorans</name>
    <dbReference type="NCBI Taxonomy" id="66821"/>
    <lineage>
        <taxon>Bacteria</taxon>
        <taxon>Pseudomonadati</taxon>
        <taxon>Campylobacterota</taxon>
        <taxon>Epsilonproteobacteria</taxon>
        <taxon>Campylobacterales</taxon>
        <taxon>Sulfurospirillaceae</taxon>
        <taxon>Sulfurospirillum</taxon>
    </lineage>
</organism>
<keyword id="KW-0686">Riboflavin biosynthesis</keyword>
<keyword id="KW-0808">Transferase</keyword>
<name>RISB_SULMU</name>
<gene>
    <name evidence="1" type="primary">ribH</name>
</gene>
<protein>
    <recommendedName>
        <fullName evidence="1">6,7-dimethyl-8-ribityllumazine synthase</fullName>
        <shortName evidence="1">DMRL synthase</shortName>
        <shortName evidence="1">LS</shortName>
        <shortName evidence="1">Lumazine synthase</shortName>
        <ecNumber evidence="1">2.5.1.78</ecNumber>
    </recommendedName>
</protein>
<accession>O68250</accession>
<feature type="chain" id="PRO_0000134751" description="6,7-dimethyl-8-ribityllumazine synthase">
    <location>
        <begin position="1"/>
        <end position="156"/>
    </location>
</feature>
<feature type="active site" description="Proton donor" evidence="1">
    <location>
        <position position="89"/>
    </location>
</feature>
<feature type="binding site" evidence="1">
    <location>
        <position position="23"/>
    </location>
    <ligand>
        <name>5-amino-6-(D-ribitylamino)uracil</name>
        <dbReference type="ChEBI" id="CHEBI:15934"/>
    </ligand>
</feature>
<feature type="binding site" evidence="1">
    <location>
        <begin position="57"/>
        <end position="59"/>
    </location>
    <ligand>
        <name>5-amino-6-(D-ribitylamino)uracil</name>
        <dbReference type="ChEBI" id="CHEBI:15934"/>
    </ligand>
</feature>
<feature type="binding site" evidence="1">
    <location>
        <begin position="81"/>
        <end position="83"/>
    </location>
    <ligand>
        <name>5-amino-6-(D-ribitylamino)uracil</name>
        <dbReference type="ChEBI" id="CHEBI:15934"/>
    </ligand>
</feature>
<feature type="binding site" evidence="1">
    <location>
        <begin position="86"/>
        <end position="87"/>
    </location>
    <ligand>
        <name>(2S)-2-hydroxy-3-oxobutyl phosphate</name>
        <dbReference type="ChEBI" id="CHEBI:58830"/>
    </ligand>
</feature>
<feature type="binding site" evidence="1">
    <location>
        <position position="114"/>
    </location>
    <ligand>
        <name>5-amino-6-(D-ribitylamino)uracil</name>
        <dbReference type="ChEBI" id="CHEBI:15934"/>
    </ligand>
</feature>
<feature type="binding site" evidence="1">
    <location>
        <position position="128"/>
    </location>
    <ligand>
        <name>(2S)-2-hydroxy-3-oxobutyl phosphate</name>
        <dbReference type="ChEBI" id="CHEBI:58830"/>
    </ligand>
</feature>
<comment type="function">
    <text evidence="1">Catalyzes the formation of 6,7-dimethyl-8-ribityllumazine by condensation of 5-amino-6-(D-ribitylamino)uracil with 3,4-dihydroxy-2-butanone 4-phosphate. This is the penultimate step in the biosynthesis of riboflavin.</text>
</comment>
<comment type="catalytic activity">
    <reaction evidence="1">
        <text>(2S)-2-hydroxy-3-oxobutyl phosphate + 5-amino-6-(D-ribitylamino)uracil = 6,7-dimethyl-8-(1-D-ribityl)lumazine + phosphate + 2 H2O + H(+)</text>
        <dbReference type="Rhea" id="RHEA:26152"/>
        <dbReference type="ChEBI" id="CHEBI:15377"/>
        <dbReference type="ChEBI" id="CHEBI:15378"/>
        <dbReference type="ChEBI" id="CHEBI:15934"/>
        <dbReference type="ChEBI" id="CHEBI:43474"/>
        <dbReference type="ChEBI" id="CHEBI:58201"/>
        <dbReference type="ChEBI" id="CHEBI:58830"/>
        <dbReference type="EC" id="2.5.1.78"/>
    </reaction>
</comment>
<comment type="pathway">
    <text evidence="1">Cofactor biosynthesis; riboflavin biosynthesis; riboflavin from 2-hydroxy-3-oxobutyl phosphate and 5-amino-6-(D-ribitylamino)uracil: step 1/2.</text>
</comment>
<comment type="similarity">
    <text evidence="1">Belongs to the DMRL synthase family.</text>
</comment>
<reference key="1">
    <citation type="journal article" date="1998" name="J. Bacteriol.">
        <title>Tetrachloroethene dehalogenase from Dehalospirillum multivorans: cloning, sequencing of the encoding genes, and expression of the pceA gene in Escherichia coli.</title>
        <authorList>
            <person name="Neumann A."/>
            <person name="Wohlfarth G."/>
            <person name="Diekert G."/>
        </authorList>
    </citation>
    <scope>NUCLEOTIDE SEQUENCE [GENOMIC DNA]</scope>
</reference>
<dbReference type="EC" id="2.5.1.78" evidence="1"/>
<dbReference type="EMBL" id="AF022812">
    <property type="protein sequence ID" value="AAC60786.1"/>
    <property type="molecule type" value="Genomic_DNA"/>
</dbReference>
<dbReference type="RefSeq" id="WP_025344663.1">
    <property type="nucleotide sequence ID" value="NZ_CP042966.1"/>
</dbReference>
<dbReference type="SMR" id="O68250"/>
<dbReference type="STRING" id="1150621.SMUL_1529"/>
<dbReference type="OrthoDB" id="9809709at2"/>
<dbReference type="BRENDA" id="2.5.1.78">
    <property type="organism ID" value="1854"/>
</dbReference>
<dbReference type="UniPathway" id="UPA00275">
    <property type="reaction ID" value="UER00404"/>
</dbReference>
<dbReference type="GO" id="GO:0005829">
    <property type="term" value="C:cytosol"/>
    <property type="evidence" value="ECO:0007669"/>
    <property type="project" value="TreeGrafter"/>
</dbReference>
<dbReference type="GO" id="GO:0009349">
    <property type="term" value="C:riboflavin synthase complex"/>
    <property type="evidence" value="ECO:0007669"/>
    <property type="project" value="InterPro"/>
</dbReference>
<dbReference type="GO" id="GO:0000906">
    <property type="term" value="F:6,7-dimethyl-8-ribityllumazine synthase activity"/>
    <property type="evidence" value="ECO:0007669"/>
    <property type="project" value="UniProtKB-UniRule"/>
</dbReference>
<dbReference type="GO" id="GO:0009231">
    <property type="term" value="P:riboflavin biosynthetic process"/>
    <property type="evidence" value="ECO:0007669"/>
    <property type="project" value="UniProtKB-UniRule"/>
</dbReference>
<dbReference type="CDD" id="cd09209">
    <property type="entry name" value="Lumazine_synthase-I"/>
    <property type="match status" value="1"/>
</dbReference>
<dbReference type="FunFam" id="3.40.50.960:FF:000001">
    <property type="entry name" value="6,7-dimethyl-8-ribityllumazine synthase"/>
    <property type="match status" value="1"/>
</dbReference>
<dbReference type="Gene3D" id="3.40.50.960">
    <property type="entry name" value="Lumazine/riboflavin synthase"/>
    <property type="match status" value="1"/>
</dbReference>
<dbReference type="HAMAP" id="MF_00178">
    <property type="entry name" value="Lumazine_synth"/>
    <property type="match status" value="1"/>
</dbReference>
<dbReference type="InterPro" id="IPR034964">
    <property type="entry name" value="LS"/>
</dbReference>
<dbReference type="InterPro" id="IPR002180">
    <property type="entry name" value="LS/RS"/>
</dbReference>
<dbReference type="InterPro" id="IPR036467">
    <property type="entry name" value="LS/RS_sf"/>
</dbReference>
<dbReference type="NCBIfam" id="TIGR00114">
    <property type="entry name" value="lumazine-synth"/>
    <property type="match status" value="1"/>
</dbReference>
<dbReference type="PANTHER" id="PTHR21058:SF0">
    <property type="entry name" value="6,7-DIMETHYL-8-RIBITYLLUMAZINE SYNTHASE"/>
    <property type="match status" value="1"/>
</dbReference>
<dbReference type="PANTHER" id="PTHR21058">
    <property type="entry name" value="6,7-DIMETHYL-8-RIBITYLLUMAZINE SYNTHASE DMRL SYNTHASE LUMAZINE SYNTHASE"/>
    <property type="match status" value="1"/>
</dbReference>
<dbReference type="Pfam" id="PF00885">
    <property type="entry name" value="DMRL_synthase"/>
    <property type="match status" value="1"/>
</dbReference>
<dbReference type="SUPFAM" id="SSF52121">
    <property type="entry name" value="Lumazine synthase"/>
    <property type="match status" value="1"/>
</dbReference>
<evidence type="ECO:0000255" key="1">
    <source>
        <dbReference type="HAMAP-Rule" id="MF_00178"/>
    </source>
</evidence>